<protein>
    <recommendedName>
        <fullName>Transcriptional regulatory protein DcuR</fullName>
    </recommendedName>
</protein>
<name>DCUR_SHIFL</name>
<reference key="1">
    <citation type="journal article" date="2002" name="Nucleic Acids Res.">
        <title>Genome sequence of Shigella flexneri 2a: insights into pathogenicity through comparison with genomes of Escherichia coli K12 and O157.</title>
        <authorList>
            <person name="Jin Q."/>
            <person name="Yuan Z."/>
            <person name="Xu J."/>
            <person name="Wang Y."/>
            <person name="Shen Y."/>
            <person name="Lu W."/>
            <person name="Wang J."/>
            <person name="Liu H."/>
            <person name="Yang J."/>
            <person name="Yang F."/>
            <person name="Zhang X."/>
            <person name="Zhang J."/>
            <person name="Yang G."/>
            <person name="Wu H."/>
            <person name="Qu D."/>
            <person name="Dong J."/>
            <person name="Sun L."/>
            <person name="Xue Y."/>
            <person name="Zhao A."/>
            <person name="Gao Y."/>
            <person name="Zhu J."/>
            <person name="Kan B."/>
            <person name="Ding K."/>
            <person name="Chen S."/>
            <person name="Cheng H."/>
            <person name="Yao Z."/>
            <person name="He B."/>
            <person name="Chen R."/>
            <person name="Ma D."/>
            <person name="Qiang B."/>
            <person name="Wen Y."/>
            <person name="Hou Y."/>
            <person name="Yu J."/>
        </authorList>
    </citation>
    <scope>NUCLEOTIDE SEQUENCE [LARGE SCALE GENOMIC DNA]</scope>
    <source>
        <strain>301 / Serotype 2a</strain>
    </source>
</reference>
<reference key="2">
    <citation type="journal article" date="2003" name="Infect. Immun.">
        <title>Complete genome sequence and comparative genomics of Shigella flexneri serotype 2a strain 2457T.</title>
        <authorList>
            <person name="Wei J."/>
            <person name="Goldberg M.B."/>
            <person name="Burland V."/>
            <person name="Venkatesan M.M."/>
            <person name="Deng W."/>
            <person name="Fournier G."/>
            <person name="Mayhew G.F."/>
            <person name="Plunkett G. III"/>
            <person name="Rose D.J."/>
            <person name="Darling A."/>
            <person name="Mau B."/>
            <person name="Perna N.T."/>
            <person name="Payne S.M."/>
            <person name="Runyen-Janecky L.J."/>
            <person name="Zhou S."/>
            <person name="Schwartz D.C."/>
            <person name="Blattner F.R."/>
        </authorList>
    </citation>
    <scope>NUCLEOTIDE SEQUENCE [LARGE SCALE GENOMIC DNA]</scope>
    <source>
        <strain>ATCC 700930 / 2457T / Serotype 2a</strain>
    </source>
</reference>
<proteinExistence type="inferred from homology"/>
<dbReference type="EMBL" id="AE005674">
    <property type="protein sequence ID" value="AAN45524.2"/>
    <property type="molecule type" value="Genomic_DNA"/>
</dbReference>
<dbReference type="EMBL" id="AE014073">
    <property type="protein sequence ID" value="AAP18675.1"/>
    <property type="molecule type" value="Genomic_DNA"/>
</dbReference>
<dbReference type="RefSeq" id="WP_000611281.1">
    <property type="nucleotide sequence ID" value="NZ_WPGW01000256.1"/>
</dbReference>
<dbReference type="SMR" id="P59339"/>
<dbReference type="STRING" id="198214.SF4099"/>
<dbReference type="PaxDb" id="198214-SF4099"/>
<dbReference type="KEGG" id="sfl:SF4099"/>
<dbReference type="KEGG" id="sfx:S3631"/>
<dbReference type="PATRIC" id="fig|198214.7.peg.4833"/>
<dbReference type="HOGENOM" id="CLU_000445_39_0_6"/>
<dbReference type="Proteomes" id="UP000001006">
    <property type="component" value="Chromosome"/>
</dbReference>
<dbReference type="Proteomes" id="UP000002673">
    <property type="component" value="Chromosome"/>
</dbReference>
<dbReference type="GO" id="GO:0005737">
    <property type="term" value="C:cytoplasm"/>
    <property type="evidence" value="ECO:0007669"/>
    <property type="project" value="UniProtKB-SubCell"/>
</dbReference>
<dbReference type="GO" id="GO:0003677">
    <property type="term" value="F:DNA binding"/>
    <property type="evidence" value="ECO:0007669"/>
    <property type="project" value="UniProtKB-KW"/>
</dbReference>
<dbReference type="GO" id="GO:0003700">
    <property type="term" value="F:DNA-binding transcription factor activity"/>
    <property type="evidence" value="ECO:0007669"/>
    <property type="project" value="InterPro"/>
</dbReference>
<dbReference type="GO" id="GO:0000156">
    <property type="term" value="F:phosphorelay response regulator activity"/>
    <property type="evidence" value="ECO:0007669"/>
    <property type="project" value="TreeGrafter"/>
</dbReference>
<dbReference type="CDD" id="cd19925">
    <property type="entry name" value="REC_citrate_TCS"/>
    <property type="match status" value="1"/>
</dbReference>
<dbReference type="Gene3D" id="3.40.50.2300">
    <property type="match status" value="1"/>
</dbReference>
<dbReference type="InterPro" id="IPR051271">
    <property type="entry name" value="2C-system_Tx_regulators"/>
</dbReference>
<dbReference type="InterPro" id="IPR011006">
    <property type="entry name" value="CheY-like_superfamily"/>
</dbReference>
<dbReference type="InterPro" id="IPR024187">
    <property type="entry name" value="Sig_transdc_resp-reg_cit/mal"/>
</dbReference>
<dbReference type="InterPro" id="IPR001789">
    <property type="entry name" value="Sig_transdc_resp-reg_receiver"/>
</dbReference>
<dbReference type="NCBIfam" id="NF007750">
    <property type="entry name" value="PRK10430.1"/>
    <property type="match status" value="1"/>
</dbReference>
<dbReference type="PANTHER" id="PTHR45526:SF1">
    <property type="entry name" value="TRANSCRIPTIONAL REGULATORY PROTEIN DCUR-RELATED"/>
    <property type="match status" value="1"/>
</dbReference>
<dbReference type="PANTHER" id="PTHR45526">
    <property type="entry name" value="TRANSCRIPTIONAL REGULATORY PROTEIN DPIA"/>
    <property type="match status" value="1"/>
</dbReference>
<dbReference type="Pfam" id="PF00072">
    <property type="entry name" value="Response_reg"/>
    <property type="match status" value="1"/>
</dbReference>
<dbReference type="PIRSF" id="PIRSF006171">
    <property type="entry name" value="RR_citrat_malat"/>
    <property type="match status" value="1"/>
</dbReference>
<dbReference type="SMART" id="SM00448">
    <property type="entry name" value="REC"/>
    <property type="match status" value="1"/>
</dbReference>
<dbReference type="SUPFAM" id="SSF52172">
    <property type="entry name" value="CheY-like"/>
    <property type="match status" value="1"/>
</dbReference>
<dbReference type="PROSITE" id="PS50110">
    <property type="entry name" value="RESPONSE_REGULATORY"/>
    <property type="match status" value="1"/>
</dbReference>
<evidence type="ECO:0000250" key="1"/>
<evidence type="ECO:0000255" key="2">
    <source>
        <dbReference type="PROSITE-ProRule" id="PRU00169"/>
    </source>
</evidence>
<evidence type="ECO:0000305" key="3"/>
<sequence length="239" mass="27458">MINVLIIDDDAMVAELNRRYVAQIPGFQCCGTASTLEKAKEIIFNSDAPIDLILLDIYMQKENGLDLLPVLHNARCKSDVIVISSAADAATIKDSLHYGVVDYLIKPFQASRFEEALTGWRQKKMALEKHQYYDQAELDQLIHGSSSNEQDPRRLPKGLTPQTLRTLCQWIDAHQDYEFSTDELANEVNISRVSCRKYLIWLVNCHILFTSIHYGVTGRPVYRYRIQAEHYSLLKQYCQ</sequence>
<keyword id="KW-0010">Activator</keyword>
<keyword id="KW-0963">Cytoplasm</keyword>
<keyword id="KW-0238">DNA-binding</keyword>
<keyword id="KW-0597">Phosphoprotein</keyword>
<keyword id="KW-1185">Reference proteome</keyword>
<keyword id="KW-0804">Transcription</keyword>
<keyword id="KW-0805">Transcription regulation</keyword>
<keyword id="KW-0902">Two-component regulatory system</keyword>
<feature type="chain" id="PRO_0000081097" description="Transcriptional regulatory protein DcuR">
    <location>
        <begin position="1"/>
        <end position="239"/>
    </location>
</feature>
<feature type="domain" description="Response regulatory" evidence="2">
    <location>
        <begin position="3"/>
        <end position="121"/>
    </location>
</feature>
<feature type="DNA-binding region" description="H-T-H motif" evidence="1">
    <location>
        <begin position="181"/>
        <end position="200"/>
    </location>
</feature>
<feature type="modified residue" description="4-aspartylphosphate" evidence="2">
    <location>
        <position position="56"/>
    </location>
</feature>
<organism>
    <name type="scientific">Shigella flexneri</name>
    <dbReference type="NCBI Taxonomy" id="623"/>
    <lineage>
        <taxon>Bacteria</taxon>
        <taxon>Pseudomonadati</taxon>
        <taxon>Pseudomonadota</taxon>
        <taxon>Gammaproteobacteria</taxon>
        <taxon>Enterobacterales</taxon>
        <taxon>Enterobacteriaceae</taxon>
        <taxon>Shigella</taxon>
    </lineage>
</organism>
<gene>
    <name type="primary">dcuR</name>
    <name type="ordered locus">SF4099</name>
    <name type="ordered locus">S3631</name>
</gene>
<accession>P59339</accession>
<comment type="function">
    <text evidence="1">Member of the two-component regulatory system DcuR/DcuS. Involved in the C4-dicarboxylate-stimulated regulation of the genes encoding the anaerobic fumarate respiratory system (frdABCD; nuoAN; dcuB; dcuC; sdhCDAB; etc.). Weakly regulates the aerobic C4-dicarboxylate transporter dctA (By similarity).</text>
</comment>
<comment type="subcellular location">
    <subcellularLocation>
        <location evidence="3">Cytoplasm</location>
    </subcellularLocation>
</comment>
<comment type="PTM">
    <text evidence="1">Phosphorylated and activated by DcuS.</text>
</comment>